<gene>
    <name evidence="12" type="primary">Ring1</name>
    <name type="synonym">Ring1A</name>
    <name type="synonym">Rnf1</name>
</gene>
<reference key="1">
    <citation type="journal article" date="1997" name="EMBO J.">
        <title>Ring1A is a transcriptional repressor that interacts with the Polycomb-M33 protein and is expressed at rhombomere boundaries in the mouse hindbrain.</title>
        <authorList>
            <person name="Schoorlemmer J."/>
            <person name="Marcos-Gutierrez C."/>
            <person name="Were F."/>
            <person name="Martinez R."/>
            <person name="Garcia E."/>
            <person name="Satijn D.P.E."/>
            <person name="Otte A.P."/>
            <person name="Vidal M."/>
        </authorList>
    </citation>
    <scope>NUCLEOTIDE SEQUENCE [MRNA] (ISOFORM 1)</scope>
    <scope>FUNCTION IN TRANSCRIPTION REPRESSION</scope>
    <scope>INTERACTION WITH CBX2</scope>
    <scope>SUBCELLULAR LOCATION</scope>
    <scope>DEVELOPMENTAL STAGE</scope>
    <source>
        <strain>Swiss Webster / NIH</strain>
        <tissue>Embryo</tissue>
    </source>
</reference>
<reference key="2">
    <citation type="submission" date="1998-10" db="EMBL/GenBank/DDBJ databases">
        <title>Sequence of the mouse major histocomaptibility locus class II region.</title>
        <authorList>
            <person name="Rowen L."/>
            <person name="Qin S."/>
            <person name="Madan A."/>
            <person name="Loretz C."/>
            <person name="James R."/>
            <person name="Dors M."/>
            <person name="Mix L."/>
            <person name="Hall J."/>
            <person name="Lasky S."/>
            <person name="Hood L."/>
        </authorList>
    </citation>
    <scope>NUCLEOTIDE SEQUENCE [LARGE SCALE GENOMIC DNA]</scope>
    <source>
        <strain>129/SvJ</strain>
    </source>
</reference>
<reference key="3">
    <citation type="journal article" date="2005" name="Science">
        <title>The transcriptional landscape of the mammalian genome.</title>
        <authorList>
            <person name="Carninci P."/>
            <person name="Kasukawa T."/>
            <person name="Katayama S."/>
            <person name="Gough J."/>
            <person name="Frith M.C."/>
            <person name="Maeda N."/>
            <person name="Oyama R."/>
            <person name="Ravasi T."/>
            <person name="Lenhard B."/>
            <person name="Wells C."/>
            <person name="Kodzius R."/>
            <person name="Shimokawa K."/>
            <person name="Bajic V.B."/>
            <person name="Brenner S.E."/>
            <person name="Batalov S."/>
            <person name="Forrest A.R."/>
            <person name="Zavolan M."/>
            <person name="Davis M.J."/>
            <person name="Wilming L.G."/>
            <person name="Aidinis V."/>
            <person name="Allen J.E."/>
            <person name="Ambesi-Impiombato A."/>
            <person name="Apweiler R."/>
            <person name="Aturaliya R.N."/>
            <person name="Bailey T.L."/>
            <person name="Bansal M."/>
            <person name="Baxter L."/>
            <person name="Beisel K.W."/>
            <person name="Bersano T."/>
            <person name="Bono H."/>
            <person name="Chalk A.M."/>
            <person name="Chiu K.P."/>
            <person name="Choudhary V."/>
            <person name="Christoffels A."/>
            <person name="Clutterbuck D.R."/>
            <person name="Crowe M.L."/>
            <person name="Dalla E."/>
            <person name="Dalrymple B.P."/>
            <person name="de Bono B."/>
            <person name="Della Gatta G."/>
            <person name="di Bernardo D."/>
            <person name="Down T."/>
            <person name="Engstrom P."/>
            <person name="Fagiolini M."/>
            <person name="Faulkner G."/>
            <person name="Fletcher C.F."/>
            <person name="Fukushima T."/>
            <person name="Furuno M."/>
            <person name="Futaki S."/>
            <person name="Gariboldi M."/>
            <person name="Georgii-Hemming P."/>
            <person name="Gingeras T.R."/>
            <person name="Gojobori T."/>
            <person name="Green R.E."/>
            <person name="Gustincich S."/>
            <person name="Harbers M."/>
            <person name="Hayashi Y."/>
            <person name="Hensch T.K."/>
            <person name="Hirokawa N."/>
            <person name="Hill D."/>
            <person name="Huminiecki L."/>
            <person name="Iacono M."/>
            <person name="Ikeo K."/>
            <person name="Iwama A."/>
            <person name="Ishikawa T."/>
            <person name="Jakt M."/>
            <person name="Kanapin A."/>
            <person name="Katoh M."/>
            <person name="Kawasawa Y."/>
            <person name="Kelso J."/>
            <person name="Kitamura H."/>
            <person name="Kitano H."/>
            <person name="Kollias G."/>
            <person name="Krishnan S.P."/>
            <person name="Kruger A."/>
            <person name="Kummerfeld S.K."/>
            <person name="Kurochkin I.V."/>
            <person name="Lareau L.F."/>
            <person name="Lazarevic D."/>
            <person name="Lipovich L."/>
            <person name="Liu J."/>
            <person name="Liuni S."/>
            <person name="McWilliam S."/>
            <person name="Madan Babu M."/>
            <person name="Madera M."/>
            <person name="Marchionni L."/>
            <person name="Matsuda H."/>
            <person name="Matsuzawa S."/>
            <person name="Miki H."/>
            <person name="Mignone F."/>
            <person name="Miyake S."/>
            <person name="Morris K."/>
            <person name="Mottagui-Tabar S."/>
            <person name="Mulder N."/>
            <person name="Nakano N."/>
            <person name="Nakauchi H."/>
            <person name="Ng P."/>
            <person name="Nilsson R."/>
            <person name="Nishiguchi S."/>
            <person name="Nishikawa S."/>
            <person name="Nori F."/>
            <person name="Ohara O."/>
            <person name="Okazaki Y."/>
            <person name="Orlando V."/>
            <person name="Pang K.C."/>
            <person name="Pavan W.J."/>
            <person name="Pavesi G."/>
            <person name="Pesole G."/>
            <person name="Petrovsky N."/>
            <person name="Piazza S."/>
            <person name="Reed J."/>
            <person name="Reid J.F."/>
            <person name="Ring B.Z."/>
            <person name="Ringwald M."/>
            <person name="Rost B."/>
            <person name="Ruan Y."/>
            <person name="Salzberg S.L."/>
            <person name="Sandelin A."/>
            <person name="Schneider C."/>
            <person name="Schoenbach C."/>
            <person name="Sekiguchi K."/>
            <person name="Semple C.A."/>
            <person name="Seno S."/>
            <person name="Sessa L."/>
            <person name="Sheng Y."/>
            <person name="Shibata Y."/>
            <person name="Shimada H."/>
            <person name="Shimada K."/>
            <person name="Silva D."/>
            <person name="Sinclair B."/>
            <person name="Sperling S."/>
            <person name="Stupka E."/>
            <person name="Sugiura K."/>
            <person name="Sultana R."/>
            <person name="Takenaka Y."/>
            <person name="Taki K."/>
            <person name="Tammoja K."/>
            <person name="Tan S.L."/>
            <person name="Tang S."/>
            <person name="Taylor M.S."/>
            <person name="Tegner J."/>
            <person name="Teichmann S.A."/>
            <person name="Ueda H.R."/>
            <person name="van Nimwegen E."/>
            <person name="Verardo R."/>
            <person name="Wei C.L."/>
            <person name="Yagi K."/>
            <person name="Yamanishi H."/>
            <person name="Zabarovsky E."/>
            <person name="Zhu S."/>
            <person name="Zimmer A."/>
            <person name="Hide W."/>
            <person name="Bult C."/>
            <person name="Grimmond S.M."/>
            <person name="Teasdale R.D."/>
            <person name="Liu E.T."/>
            <person name="Brusic V."/>
            <person name="Quackenbush J."/>
            <person name="Wahlestedt C."/>
            <person name="Mattick J.S."/>
            <person name="Hume D.A."/>
            <person name="Kai C."/>
            <person name="Sasaki D."/>
            <person name="Tomaru Y."/>
            <person name="Fukuda S."/>
            <person name="Kanamori-Katayama M."/>
            <person name="Suzuki M."/>
            <person name="Aoki J."/>
            <person name="Arakawa T."/>
            <person name="Iida J."/>
            <person name="Imamura K."/>
            <person name="Itoh M."/>
            <person name="Kato T."/>
            <person name="Kawaji H."/>
            <person name="Kawagashira N."/>
            <person name="Kawashima T."/>
            <person name="Kojima M."/>
            <person name="Kondo S."/>
            <person name="Konno H."/>
            <person name="Nakano K."/>
            <person name="Ninomiya N."/>
            <person name="Nishio T."/>
            <person name="Okada M."/>
            <person name="Plessy C."/>
            <person name="Shibata K."/>
            <person name="Shiraki T."/>
            <person name="Suzuki S."/>
            <person name="Tagami M."/>
            <person name="Waki K."/>
            <person name="Watahiki A."/>
            <person name="Okamura-Oho Y."/>
            <person name="Suzuki H."/>
            <person name="Kawai J."/>
            <person name="Hayashizaki Y."/>
        </authorList>
    </citation>
    <scope>NUCLEOTIDE SEQUENCE [LARGE SCALE MRNA] (ISOFORMS 1 AND 3)</scope>
    <source>
        <strain>NOD</strain>
    </source>
</reference>
<reference key="4">
    <citation type="submission" date="2005-07" db="EMBL/GenBank/DDBJ databases">
        <title>Cloning of mouse full open reading frames in Gateway(R) system entry vector (pDONR201).</title>
        <authorList>
            <person name="Ebert L."/>
            <person name="Muenstermann E."/>
            <person name="Schatten R."/>
            <person name="Henze S."/>
            <person name="Bohn E."/>
            <person name="Mollenhauer J."/>
            <person name="Wiemann S."/>
            <person name="Schick M."/>
            <person name="Korn B."/>
        </authorList>
    </citation>
    <scope>NUCLEOTIDE SEQUENCE [LARGE SCALE MRNA] (ISOFORM 2)</scope>
</reference>
<reference key="5">
    <citation type="journal article" date="2004" name="Genome Res.">
        <title>The status, quality, and expansion of the NIH full-length cDNA project: the Mammalian Gene Collection (MGC).</title>
        <authorList>
            <consortium name="The MGC Project Team"/>
        </authorList>
    </citation>
    <scope>NUCLEOTIDE SEQUENCE [LARGE SCALE MRNA] (ISOFORMS 1 AND 3)</scope>
    <source>
        <strain>Czech II</strain>
        <tissue>Embryo</tissue>
        <tissue>Mammary gland</tissue>
    </source>
</reference>
<reference key="6">
    <citation type="journal article" date="2004" name="Dev. Cell">
        <title>Polycomb group proteins Ring1A/B link ubiquitylation of histone H2A to heritable gene silencing and X inactivation.</title>
        <authorList>
            <person name="de Napoles M."/>
            <person name="Mermoud J.E."/>
            <person name="Wakao R."/>
            <person name="Tang Y.A."/>
            <person name="Endoh M."/>
            <person name="Appanah R."/>
            <person name="Nesterova T.B."/>
            <person name="Silva J."/>
            <person name="Otte A.P."/>
            <person name="Vidal M."/>
            <person name="Koseki H."/>
            <person name="Brockdorff N."/>
        </authorList>
    </citation>
    <scope>ENZYME ACTIVITY</scope>
    <scope>FUNCTION</scope>
</reference>
<reference key="7">
    <citation type="journal article" date="2005" name="Mol. Cell">
        <title>Role of Bmi-1 and Ring1A in H2A ubiquitylation and Hox gene silencing.</title>
        <authorList>
            <person name="Cao R."/>
            <person name="Tsukada Y."/>
            <person name="Zhang Y."/>
        </authorList>
    </citation>
    <scope>RECONSTITUTION OF A PRC1-LIKE COMPLEX</scope>
    <scope>INTERACTION WITH BMI1; CBX8 AND PHC2</scope>
</reference>
<reference key="8">
    <citation type="journal article" date="2006" name="EMBO J.">
        <title>Structure and E3-ligase activity of the Ring-Ring complex of polycomb proteins Bmi1 and Ring1b.</title>
        <authorList>
            <person name="Buchwald G."/>
            <person name="van der Stoop P."/>
            <person name="Weichenrieder O."/>
            <person name="Perrakis A."/>
            <person name="van Lohuizen M."/>
            <person name="Sixma T.K."/>
        </authorList>
    </citation>
    <scope>FUNCTION</scope>
    <scope>INTERACTION WITH BMI1</scope>
    <scope>SUBUNIT</scope>
</reference>
<reference key="9">
    <citation type="journal article" date="2010" name="Cell">
        <title>A tissue-specific atlas of mouse protein phosphorylation and expression.</title>
        <authorList>
            <person name="Huttlin E.L."/>
            <person name="Jedrychowski M.P."/>
            <person name="Elias J.E."/>
            <person name="Goswami T."/>
            <person name="Rad R."/>
            <person name="Beausoleil S.A."/>
            <person name="Villen J."/>
            <person name="Haas W."/>
            <person name="Sowa M.E."/>
            <person name="Gygi S.P."/>
        </authorList>
    </citation>
    <scope>PHOSPHORYLATION [LARGE SCALE ANALYSIS] AT SER-38</scope>
    <scope>IDENTIFICATION BY MASS SPECTROMETRY [LARGE SCALE ANALYSIS]</scope>
    <source>
        <tissue>Pancreas</tissue>
        <tissue>Testis</tissue>
    </source>
</reference>
<proteinExistence type="evidence at protein level"/>
<protein>
    <recommendedName>
        <fullName>E3 ubiquitin-protein ligase RING1</fullName>
        <ecNumber>2.3.2.27</ecNumber>
    </recommendedName>
    <alternativeName>
        <fullName>Polycomb complex protein RING1</fullName>
    </alternativeName>
    <alternativeName>
        <fullName>RING finger protein 1</fullName>
    </alternativeName>
    <alternativeName>
        <fullName evidence="11">RING-type E3 ubiquitin transferase RING1</fullName>
    </alternativeName>
    <alternativeName>
        <fullName>Transcription repressor Ring1A</fullName>
    </alternativeName>
</protein>
<comment type="function">
    <text evidence="1 5 6 7">Constitutes one of the E3 ubiquitin-protein ligases that mediate monoubiquitination of 'Lys-119' of histone H2A, thereby playing a central role in histone code and gene regulation. H2A 'Lys-119' ubiquitination gives a specific tag for epigenetic transcriptional repression and participates in X chromosome inactivation of female mammals. Essential component of a Polycomb group (PcG) multiprotein PRC1-like complex, a complex class required to maintain the transcriptionally repressive state of many genes, including Hox genes, throughout development. PcG PRC1 complex acts via chromatin remodeling and modification of histones, rendering chromatin heritably changed in its expressibility. Compared to RNF2/RING2, it does not have the main E3 ubiquitin ligase activity on histone H2A, and it may rather act as a modulator of RNF2/RING2 activity (By similarity).</text>
</comment>
<comment type="catalytic activity">
    <reaction>
        <text>S-ubiquitinyl-[E2 ubiquitin-conjugating enzyme]-L-cysteine + [acceptor protein]-L-lysine = [E2 ubiquitin-conjugating enzyme]-L-cysteine + N(6)-ubiquitinyl-[acceptor protein]-L-lysine.</text>
        <dbReference type="EC" id="2.3.2.27"/>
    </reaction>
</comment>
<comment type="pathway">
    <text>Protein modification; protein ubiquitination.</text>
</comment>
<comment type="subunit">
    <text evidence="2">Component of chromatin-associated Polycomb (PcG) complexes. Part of the E2F6.com-1 complex in G0 phase composed of E2F6, MGA, MAX, TFDP1, CBX3, BAT8, EUHMTASE1, RING1, RNF2/RING2 MBLR, L3MBTL2 and YAF2. Interacts with CBX2 and PCGF6. Component of a PRC1-like complex. Component of repressive BCOR complex containing Polycomb group subcomplex at least composed of RYBP, PCGF1, BCOR and RNF2/RING2. Interacts with PHC2, PCGF2, RNF2; CBX6, CBX7 and CBX8. Interacts with BMI1 (By similarity). Interacts with MN1 (By similarity). Interacts with USP26.</text>
</comment>
<comment type="interaction">
    <interactant intactId="EBI-929310">
        <id>O35730</id>
    </interactant>
    <interactant intactId="EBI-927401">
        <id>P25916</id>
        <label>Bmi1</label>
    </interactant>
    <organismsDiffer>false</organismsDiffer>
    <experiments>4</experiments>
</comment>
<comment type="interaction">
    <interactant intactId="EBI-929310">
        <id>O35730</id>
    </interactant>
    <interactant intactId="EBI-1216641">
        <id>Q9QXV1</id>
        <label>Cbx8</label>
    </interactant>
    <organismsDiffer>false</organismsDiffer>
    <experiments>2</experiments>
</comment>
<comment type="interaction">
    <interactant intactId="EBI-929310">
        <id>O35730</id>
    </interactant>
    <interactant intactId="EBI-642357">
        <id>Q9QWH1</id>
        <label>Phc2</label>
    </interactant>
    <organismsDiffer>false</organismsDiffer>
    <experiments>2</experiments>
</comment>
<comment type="interaction">
    <interactant intactId="EBI-929310">
        <id>O35730</id>
    </interactant>
    <interactant intactId="EBI-927321">
        <id>Q9CQJ4</id>
        <label>Rnf2</label>
    </interactant>
    <organismsDiffer>false</organismsDiffer>
    <experiments>3</experiments>
</comment>
<comment type="interaction">
    <interactant intactId="EBI-929310">
        <id>O35730</id>
    </interactant>
    <interactant intactId="EBI-929290">
        <id>Q8CCI5</id>
        <label>Rybp</label>
    </interactant>
    <organismsDiffer>false</organismsDiffer>
    <experiments>4</experiments>
</comment>
<comment type="subcellular location">
    <subcellularLocation>
        <location evidence="1">Nucleus speckle</location>
    </subcellularLocation>
</comment>
<comment type="alternative products">
    <event type="alternative splicing"/>
    <isoform>
        <id>O35730-1</id>
        <name>1</name>
        <sequence type="displayed"/>
    </isoform>
    <isoform>
        <id>O35730-2</id>
        <name>2</name>
        <sequence type="described" ref="VSP_017695"/>
    </isoform>
    <isoform>
        <id>O35730-3</id>
        <name>3</name>
        <sequence type="described" ref="VSP_017696 VSP_017697"/>
    </isoform>
</comment>
<comment type="developmental stage">
    <text evidence="7">Expressed in cells of the central nervous system (CNS) from 8.5 to 11.5 dpc. Expressed in the hindbrain (in the rhombomere boundaries) at 10.5 dpc. Expressed in CNS (ventricular zone and spinal cord), peripheral nervous system (PNS, sensory cranial and spinal ganglia), olfactory and tongue epithelia at 13.5 dpc. Expressed in CNS, thymus, various epithelial cell types including the olfactory, tooth and tongue epithelia at 15.5 dpc.</text>
</comment>
<comment type="sequence caution" evidence="11">
    <conflict type="erroneous initiation">
        <sequence resource="EMBL-CDS" id="AAH09070"/>
    </conflict>
</comment>
<accession>O35730</accession>
<accession>Q3U242</accession>
<accession>Q3U333</accession>
<accession>Q4FK33</accession>
<accession>Q63ZX8</accession>
<accession>Q921Z8</accession>
<feature type="chain" id="PRO_0000056386" description="E3 ubiquitin-protein ligase RING1">
    <location>
        <begin position="1"/>
        <end position="406"/>
    </location>
</feature>
<feature type="zinc finger region" description="RING-type" evidence="3">
    <location>
        <begin position="48"/>
        <end position="88"/>
    </location>
</feature>
<feature type="region of interest" description="Necessary for transcriptional repression">
    <location>
        <begin position="30"/>
        <end position="234"/>
    </location>
</feature>
<feature type="region of interest" description="Disordered" evidence="4">
    <location>
        <begin position="151"/>
        <end position="263"/>
    </location>
</feature>
<feature type="region of interest" description="Necessary for interaction with CBX2" evidence="7">
    <location>
        <begin position="230"/>
        <end position="406"/>
    </location>
</feature>
<feature type="region of interest" description="Disordered" evidence="4">
    <location>
        <begin position="309"/>
        <end position="354"/>
    </location>
</feature>
<feature type="short sequence motif" description="Nuclear localization signal" evidence="1">
    <location>
        <begin position="201"/>
        <end position="204"/>
    </location>
</feature>
<feature type="compositionally biased region" description="Acidic residues" evidence="4">
    <location>
        <begin position="175"/>
        <end position="187"/>
    </location>
</feature>
<feature type="compositionally biased region" description="Gly residues" evidence="4">
    <location>
        <begin position="214"/>
        <end position="228"/>
    </location>
</feature>
<feature type="compositionally biased region" description="Gly residues" evidence="4">
    <location>
        <begin position="235"/>
        <end position="244"/>
    </location>
</feature>
<feature type="compositionally biased region" description="Pro residues" evidence="4">
    <location>
        <begin position="246"/>
        <end position="258"/>
    </location>
</feature>
<feature type="compositionally biased region" description="Gly residues" evidence="4">
    <location>
        <begin position="317"/>
        <end position="343"/>
    </location>
</feature>
<feature type="modified residue" description="Phosphothreonine" evidence="2">
    <location>
        <position position="24"/>
    </location>
</feature>
<feature type="modified residue" description="Phosphoserine" evidence="13">
    <location>
        <position position="38"/>
    </location>
</feature>
<feature type="modified residue" description="Phosphoserine" evidence="2">
    <location>
        <position position="140"/>
    </location>
</feature>
<feature type="modified residue" description="Phosphoserine" evidence="2">
    <location>
        <position position="187"/>
    </location>
</feature>
<feature type="modified residue" description="Phosphoserine" evidence="2">
    <location>
        <position position="190"/>
    </location>
</feature>
<feature type="modified residue" description="Phosphothreonine" evidence="2">
    <location>
        <position position="215"/>
    </location>
</feature>
<feature type="modified residue" description="Phosphoserine" evidence="2">
    <location>
        <position position="229"/>
    </location>
</feature>
<feature type="modified residue" description="Phosphoserine" evidence="2">
    <location>
        <position position="232"/>
    </location>
</feature>
<feature type="modified residue" description="Phosphoserine" evidence="2">
    <location>
        <position position="248"/>
    </location>
</feature>
<feature type="modified residue" description="Phosphoserine" evidence="2">
    <location>
        <position position="254"/>
    </location>
</feature>
<feature type="splice variant" id="VSP_017695" description="In isoform 2." evidence="10">
    <location>
        <begin position="1"/>
        <end position="29"/>
    </location>
</feature>
<feature type="splice variant" id="VSP_017696" description="In isoform 3." evidence="8 9">
    <original>AQRVRRPMPGSDQTATMSGGEGEPGEGEGDG</original>
    <variation>CGEPETLLPMGLVWSTGLIVCIRAARWRPCS</variation>
    <location>
        <begin position="153"/>
        <end position="183"/>
    </location>
</feature>
<feature type="splice variant" id="VSP_017697" description="In isoform 3." evidence="8 9">
    <location>
        <begin position="184"/>
        <end position="406"/>
    </location>
</feature>
<feature type="sequence conflict" description="In Ref. 4; CAJ18427." evidence="11" ref="4">
    <original>M</original>
    <variation>V</variation>
    <location>
        <position position="54"/>
    </location>
</feature>
<feature type="sequence conflict" description="In Ref. 4; CAJ18427 and 5; AAH09070." evidence="11" ref="4 5">
    <original>F</original>
    <variation>L</variation>
    <location>
        <position position="68"/>
    </location>
</feature>
<feature type="sequence conflict" description="In Ref. 3; BAE33300, 4 and 5; AAH09070." evidence="11" ref="3 4 5">
    <original>T</original>
    <variation>A</variation>
    <location>
        <position position="314"/>
    </location>
</feature>
<name>RING1_MOUSE</name>
<sequence length="406" mass="42631">MTTPANAQNASKTWELSLYELHRTPQEAIMDGTEIAVSPRSLHSELMCPICLDMLKNTMTTKECLHRFCSDCIVTALRSGNKECPTCRKKLVSKRSLRPDPNFDALISKIYPSREEYEAHQDRVLIRLSRLHNQQALSSSIEEGLRMQAMHRAQRVRRPMPGSDQTATMSGGEGEPGEGEGDGEDVSSDSAPDSAPGPAPKRPRGAGAGASSVGTGGGAAGGACGGAGSEDSGDRGGTLGGGTLGPPSPPGAPSPPEPGGEIELVFRPHPLLVEKGEYCQTRYVKTTGNATVDHLSKYLALRIALERRQQQETTEPGGPGGGASDTGGPDGGGGERGVAGGGEGPEEPALPSLEGVSEKQYTIYIAPGGGAFTTLNGSLTLELVNEKFWKVSRPLELCYAPTKDPK</sequence>
<dbReference type="EC" id="2.3.2.27"/>
<dbReference type="EMBL" id="Y12881">
    <property type="protein sequence ID" value="CAA73381.1"/>
    <property type="molecule type" value="mRNA"/>
</dbReference>
<dbReference type="EMBL" id="AF100956">
    <property type="protein sequence ID" value="AAC69901.1"/>
    <property type="molecule type" value="Genomic_DNA"/>
</dbReference>
<dbReference type="EMBL" id="AK154962">
    <property type="protein sequence ID" value="BAE32956.1"/>
    <property type="molecule type" value="mRNA"/>
</dbReference>
<dbReference type="EMBL" id="AK155509">
    <property type="protein sequence ID" value="BAE33300.1"/>
    <property type="molecule type" value="mRNA"/>
</dbReference>
<dbReference type="EMBL" id="CT010219">
    <property type="protein sequence ID" value="CAJ18427.1"/>
    <property type="molecule type" value="mRNA"/>
</dbReference>
<dbReference type="EMBL" id="BC009070">
    <property type="protein sequence ID" value="AAH09070.1"/>
    <property type="status" value="ALT_INIT"/>
    <property type="molecule type" value="mRNA"/>
</dbReference>
<dbReference type="EMBL" id="BC082771">
    <property type="protein sequence ID" value="AAH82771.1"/>
    <property type="molecule type" value="mRNA"/>
</dbReference>
<dbReference type="CCDS" id="CCDS50070.1">
    <molecule id="O35730-1"/>
</dbReference>
<dbReference type="RefSeq" id="NP_033092.3">
    <molecule id="O35730-1"/>
    <property type="nucleotide sequence ID" value="NM_009066.3"/>
</dbReference>
<dbReference type="SMR" id="O35730"/>
<dbReference type="BioGRID" id="202894">
    <property type="interactions" value="41"/>
</dbReference>
<dbReference type="FunCoup" id="O35730">
    <property type="interactions" value="2922"/>
</dbReference>
<dbReference type="IntAct" id="O35730">
    <property type="interactions" value="33"/>
</dbReference>
<dbReference type="MINT" id="O35730"/>
<dbReference type="STRING" id="10090.ENSMUSP00000025183"/>
<dbReference type="iPTMnet" id="O35730"/>
<dbReference type="PhosphoSitePlus" id="O35730"/>
<dbReference type="PaxDb" id="10090-ENSMUSP00000025183"/>
<dbReference type="PeptideAtlas" id="O35730"/>
<dbReference type="ProteomicsDB" id="255148">
    <molecule id="O35730-1"/>
</dbReference>
<dbReference type="ProteomicsDB" id="255149">
    <molecule id="O35730-2"/>
</dbReference>
<dbReference type="ProteomicsDB" id="255150">
    <molecule id="O35730-3"/>
</dbReference>
<dbReference type="Pumba" id="O35730"/>
<dbReference type="Antibodypedia" id="1772">
    <property type="antibodies" value="589 antibodies from 36 providers"/>
</dbReference>
<dbReference type="DNASU" id="19763"/>
<dbReference type="Ensembl" id="ENSMUST00000025183.9">
    <molecule id="O35730-1"/>
    <property type="protein sequence ID" value="ENSMUSP00000025183.9"/>
    <property type="gene ID" value="ENSMUSG00000024325.9"/>
</dbReference>
<dbReference type="GeneID" id="19763"/>
<dbReference type="KEGG" id="mmu:19763"/>
<dbReference type="UCSC" id="uc008cas.2">
    <molecule id="O35730-1"/>
    <property type="organism name" value="mouse"/>
</dbReference>
<dbReference type="AGR" id="MGI:1101770"/>
<dbReference type="CTD" id="6015"/>
<dbReference type="MGI" id="MGI:1101770">
    <property type="gene designation" value="Ring1"/>
</dbReference>
<dbReference type="VEuPathDB" id="HostDB:ENSMUSG00000024325"/>
<dbReference type="eggNOG" id="KOG0311">
    <property type="taxonomic scope" value="Eukaryota"/>
</dbReference>
<dbReference type="GeneTree" id="ENSGT00940000161022"/>
<dbReference type="HOGENOM" id="CLU_056557_1_0_1"/>
<dbReference type="InParanoid" id="O35730"/>
<dbReference type="OMA" id="GWKGMIV"/>
<dbReference type="OrthoDB" id="337575at2759"/>
<dbReference type="PhylomeDB" id="O35730"/>
<dbReference type="TreeFam" id="TF105501"/>
<dbReference type="Reactome" id="R-MMU-3108214">
    <property type="pathway name" value="SUMOylation of DNA damage response and repair proteins"/>
</dbReference>
<dbReference type="Reactome" id="R-MMU-3899300">
    <property type="pathway name" value="SUMOylation of transcription cofactors"/>
</dbReference>
<dbReference type="Reactome" id="R-MMU-4551638">
    <property type="pathway name" value="SUMOylation of chromatin organization proteins"/>
</dbReference>
<dbReference type="Reactome" id="R-MMU-4570464">
    <property type="pathway name" value="SUMOylation of RNA binding proteins"/>
</dbReference>
<dbReference type="Reactome" id="R-MMU-8939243">
    <property type="pathway name" value="RUNX1 interacts with co-factors whose precise effect on RUNX1 targets is not known"/>
</dbReference>
<dbReference type="Reactome" id="R-MMU-8953750">
    <property type="pathway name" value="Transcriptional Regulation by E2F6"/>
</dbReference>
<dbReference type="UniPathway" id="UPA00143"/>
<dbReference type="BioGRID-ORCS" id="19763">
    <property type="hits" value="4 hits in 80 CRISPR screens"/>
</dbReference>
<dbReference type="ChiTaRS" id="Ring1">
    <property type="organism name" value="mouse"/>
</dbReference>
<dbReference type="PRO" id="PR:O35730"/>
<dbReference type="Proteomes" id="UP000000589">
    <property type="component" value="Chromosome 17"/>
</dbReference>
<dbReference type="RNAct" id="O35730">
    <property type="molecule type" value="protein"/>
</dbReference>
<dbReference type="Bgee" id="ENSMUSG00000024325">
    <property type="expression patterns" value="Expressed in embryonic brain and 215 other cell types or tissues"/>
</dbReference>
<dbReference type="GO" id="GO:0005829">
    <property type="term" value="C:cytosol"/>
    <property type="evidence" value="ECO:0007669"/>
    <property type="project" value="Ensembl"/>
</dbReference>
<dbReference type="GO" id="GO:0016604">
    <property type="term" value="C:nuclear body"/>
    <property type="evidence" value="ECO:0000314"/>
    <property type="project" value="MGI"/>
</dbReference>
<dbReference type="GO" id="GO:0016607">
    <property type="term" value="C:nuclear speck"/>
    <property type="evidence" value="ECO:0007669"/>
    <property type="project" value="UniProtKB-SubCell"/>
</dbReference>
<dbReference type="GO" id="GO:0031519">
    <property type="term" value="C:PcG protein complex"/>
    <property type="evidence" value="ECO:0000314"/>
    <property type="project" value="MGI"/>
</dbReference>
<dbReference type="GO" id="GO:0035102">
    <property type="term" value="C:PRC1 complex"/>
    <property type="evidence" value="ECO:0000314"/>
    <property type="project" value="MGI"/>
</dbReference>
<dbReference type="GO" id="GO:0001739">
    <property type="term" value="C:sex chromatin"/>
    <property type="evidence" value="ECO:0000314"/>
    <property type="project" value="MGI"/>
</dbReference>
<dbReference type="GO" id="GO:0003682">
    <property type="term" value="F:chromatin binding"/>
    <property type="evidence" value="ECO:0000314"/>
    <property type="project" value="MGI"/>
</dbReference>
<dbReference type="GO" id="GO:0016740">
    <property type="term" value="F:transferase activity"/>
    <property type="evidence" value="ECO:0007669"/>
    <property type="project" value="UniProtKB-KW"/>
</dbReference>
<dbReference type="GO" id="GO:0097027">
    <property type="term" value="F:ubiquitin-protein transferase activator activity"/>
    <property type="evidence" value="ECO:0000314"/>
    <property type="project" value="MGI"/>
</dbReference>
<dbReference type="GO" id="GO:0008270">
    <property type="term" value="F:zinc ion binding"/>
    <property type="evidence" value="ECO:0007669"/>
    <property type="project" value="UniProtKB-KW"/>
</dbReference>
<dbReference type="GO" id="GO:0009952">
    <property type="term" value="P:anterior/posterior pattern specification"/>
    <property type="evidence" value="ECO:0000315"/>
    <property type="project" value="MGI"/>
</dbReference>
<dbReference type="GO" id="GO:0048593">
    <property type="term" value="P:camera-type eye morphogenesis"/>
    <property type="evidence" value="ECO:0000316"/>
    <property type="project" value="MGI"/>
</dbReference>
<dbReference type="GO" id="GO:0006325">
    <property type="term" value="P:chromatin organization"/>
    <property type="evidence" value="ECO:0000314"/>
    <property type="project" value="MGI"/>
</dbReference>
<dbReference type="GO" id="GO:0006338">
    <property type="term" value="P:chromatin remodeling"/>
    <property type="evidence" value="ECO:0007669"/>
    <property type="project" value="Ensembl"/>
</dbReference>
<dbReference type="GO" id="GO:0045892">
    <property type="term" value="P:negative regulation of DNA-templated transcription"/>
    <property type="evidence" value="ECO:0000314"/>
    <property type="project" value="MGI"/>
</dbReference>
<dbReference type="GO" id="GO:0016567">
    <property type="term" value="P:protein ubiquitination"/>
    <property type="evidence" value="ECO:0007669"/>
    <property type="project" value="UniProtKB-UniPathway"/>
</dbReference>
<dbReference type="CDD" id="cd17166">
    <property type="entry name" value="RAWUL_RING1"/>
    <property type="match status" value="1"/>
</dbReference>
<dbReference type="CDD" id="cd16739">
    <property type="entry name" value="RING-HC_RING1"/>
    <property type="match status" value="1"/>
</dbReference>
<dbReference type="FunFam" id="3.30.40.10:FF:000265">
    <property type="entry name" value="E3 ubiquitin-protein ligase RING1"/>
    <property type="match status" value="1"/>
</dbReference>
<dbReference type="Gene3D" id="3.10.20.90">
    <property type="entry name" value="Phosphatidylinositol 3-kinase Catalytic Subunit, Chain A, domain 1"/>
    <property type="match status" value="1"/>
</dbReference>
<dbReference type="Gene3D" id="3.30.40.10">
    <property type="entry name" value="Zinc/RING finger domain, C3HC4 (zinc finger)"/>
    <property type="match status" value="1"/>
</dbReference>
<dbReference type="InterPro" id="IPR032443">
    <property type="entry name" value="RAWUL"/>
</dbReference>
<dbReference type="InterPro" id="IPR043540">
    <property type="entry name" value="RING1/RING2"/>
</dbReference>
<dbReference type="InterPro" id="IPR042741">
    <property type="entry name" value="RING1_RING-HC"/>
</dbReference>
<dbReference type="InterPro" id="IPR001841">
    <property type="entry name" value="Znf_RING"/>
</dbReference>
<dbReference type="InterPro" id="IPR013083">
    <property type="entry name" value="Znf_RING/FYVE/PHD"/>
</dbReference>
<dbReference type="InterPro" id="IPR017907">
    <property type="entry name" value="Znf_RING_CS"/>
</dbReference>
<dbReference type="PANTHER" id="PTHR46076:SF2">
    <property type="entry name" value="E3 UBIQUITIN-PROTEIN LIGASE RING1"/>
    <property type="match status" value="1"/>
</dbReference>
<dbReference type="PANTHER" id="PTHR46076">
    <property type="entry name" value="E3 UBIQUITIN-PROTEIN LIGASE RING1 / RING 2 FAMILY MEMBER"/>
    <property type="match status" value="1"/>
</dbReference>
<dbReference type="Pfam" id="PF16207">
    <property type="entry name" value="RAWUL"/>
    <property type="match status" value="1"/>
</dbReference>
<dbReference type="Pfam" id="PF13923">
    <property type="entry name" value="zf-C3HC4_2"/>
    <property type="match status" value="1"/>
</dbReference>
<dbReference type="SMART" id="SM00184">
    <property type="entry name" value="RING"/>
    <property type="match status" value="1"/>
</dbReference>
<dbReference type="SUPFAM" id="SSF57850">
    <property type="entry name" value="RING/U-box"/>
    <property type="match status" value="1"/>
</dbReference>
<dbReference type="PROSITE" id="PS00518">
    <property type="entry name" value="ZF_RING_1"/>
    <property type="match status" value="1"/>
</dbReference>
<dbReference type="PROSITE" id="PS50089">
    <property type="entry name" value="ZF_RING_2"/>
    <property type="match status" value="1"/>
</dbReference>
<organism>
    <name type="scientific">Mus musculus</name>
    <name type="common">Mouse</name>
    <dbReference type="NCBI Taxonomy" id="10090"/>
    <lineage>
        <taxon>Eukaryota</taxon>
        <taxon>Metazoa</taxon>
        <taxon>Chordata</taxon>
        <taxon>Craniata</taxon>
        <taxon>Vertebrata</taxon>
        <taxon>Euteleostomi</taxon>
        <taxon>Mammalia</taxon>
        <taxon>Eutheria</taxon>
        <taxon>Euarchontoglires</taxon>
        <taxon>Glires</taxon>
        <taxon>Rodentia</taxon>
        <taxon>Myomorpha</taxon>
        <taxon>Muroidea</taxon>
        <taxon>Muridae</taxon>
        <taxon>Murinae</taxon>
        <taxon>Mus</taxon>
        <taxon>Mus</taxon>
    </lineage>
</organism>
<evidence type="ECO:0000250" key="1"/>
<evidence type="ECO:0000250" key="2">
    <source>
        <dbReference type="UniProtKB" id="Q06587"/>
    </source>
</evidence>
<evidence type="ECO:0000255" key="3">
    <source>
        <dbReference type="PROSITE-ProRule" id="PRU00175"/>
    </source>
</evidence>
<evidence type="ECO:0000256" key="4">
    <source>
        <dbReference type="SAM" id="MobiDB-lite"/>
    </source>
</evidence>
<evidence type="ECO:0000269" key="5">
    <source>
    </source>
</evidence>
<evidence type="ECO:0000269" key="6">
    <source>
    </source>
</evidence>
<evidence type="ECO:0000269" key="7">
    <source>
    </source>
</evidence>
<evidence type="ECO:0000303" key="8">
    <source>
    </source>
</evidence>
<evidence type="ECO:0000303" key="9">
    <source>
    </source>
</evidence>
<evidence type="ECO:0000303" key="10">
    <source ref="4"/>
</evidence>
<evidence type="ECO:0000305" key="11"/>
<evidence type="ECO:0000312" key="12">
    <source>
        <dbReference type="MGI" id="MGI:1101770"/>
    </source>
</evidence>
<evidence type="ECO:0007744" key="13">
    <source>
    </source>
</evidence>
<keyword id="KW-0025">Alternative splicing</keyword>
<keyword id="KW-0156">Chromatin regulator</keyword>
<keyword id="KW-0479">Metal-binding</keyword>
<keyword id="KW-0539">Nucleus</keyword>
<keyword id="KW-0597">Phosphoprotein</keyword>
<keyword id="KW-1185">Reference proteome</keyword>
<keyword id="KW-0678">Repressor</keyword>
<keyword id="KW-0804">Transcription</keyword>
<keyword id="KW-0805">Transcription regulation</keyword>
<keyword id="KW-0808">Transferase</keyword>
<keyword id="KW-0833">Ubl conjugation pathway</keyword>
<keyword id="KW-0862">Zinc</keyword>
<keyword id="KW-0863">Zinc-finger</keyword>